<dbReference type="EMBL" id="AK081054">
    <property type="protein sequence ID" value="BAC38124.1"/>
    <property type="molecule type" value="mRNA"/>
</dbReference>
<dbReference type="RefSeq" id="NP_899134.2">
    <property type="nucleotide sequence ID" value="NM_183311.2"/>
</dbReference>
<dbReference type="BioGRID" id="236974">
    <property type="interactions" value="3"/>
</dbReference>
<dbReference type="FunCoup" id="Q8C4U2">
    <property type="interactions" value="4"/>
</dbReference>
<dbReference type="STRING" id="10090.ENSMUSP00000104046"/>
<dbReference type="GlyCosmos" id="Q8C4U2">
    <property type="glycosylation" value="3 sites, No reported glycans"/>
</dbReference>
<dbReference type="GlyGen" id="Q8C4U2">
    <property type="glycosylation" value="5 sites, 2 N-linked glycans (2 sites)"/>
</dbReference>
<dbReference type="iPTMnet" id="Q8C4U2"/>
<dbReference type="PhosphoSitePlus" id="Q8C4U2"/>
<dbReference type="PaxDb" id="10090-ENSMUSP00000104046"/>
<dbReference type="ProteomicsDB" id="260680"/>
<dbReference type="GeneID" id="330485"/>
<dbReference type="KEGG" id="mmu:330485"/>
<dbReference type="AGR" id="MGI:3607779"/>
<dbReference type="CTD" id="284339"/>
<dbReference type="MGI" id="MGI:3607779">
    <property type="gene designation" value="Tmem145"/>
</dbReference>
<dbReference type="eggNOG" id="KOG1388">
    <property type="taxonomic scope" value="Eukaryota"/>
</dbReference>
<dbReference type="eggNOG" id="KOG4290">
    <property type="taxonomic scope" value="Eukaryota"/>
</dbReference>
<dbReference type="InParanoid" id="Q8C4U2"/>
<dbReference type="OrthoDB" id="205745at2759"/>
<dbReference type="PhylomeDB" id="Q8C4U2"/>
<dbReference type="BioGRID-ORCS" id="330485">
    <property type="hits" value="2 hits in 80 CRISPR screens"/>
</dbReference>
<dbReference type="ChiTaRS" id="Tmem145">
    <property type="organism name" value="mouse"/>
</dbReference>
<dbReference type="PRO" id="PR:Q8C4U2"/>
<dbReference type="Proteomes" id="UP000000589">
    <property type="component" value="Unplaced"/>
</dbReference>
<dbReference type="RNAct" id="Q8C4U2">
    <property type="molecule type" value="protein"/>
</dbReference>
<dbReference type="GO" id="GO:0016020">
    <property type="term" value="C:membrane"/>
    <property type="evidence" value="ECO:0007669"/>
    <property type="project" value="UniProtKB-SubCell"/>
</dbReference>
<dbReference type="GO" id="GO:0007186">
    <property type="term" value="P:G protein-coupled receptor signaling pathway"/>
    <property type="evidence" value="ECO:0007669"/>
    <property type="project" value="InterPro"/>
</dbReference>
<dbReference type="GO" id="GO:0019236">
    <property type="term" value="P:response to pheromone"/>
    <property type="evidence" value="ECO:0007669"/>
    <property type="project" value="InterPro"/>
</dbReference>
<dbReference type="InterPro" id="IPR053880">
    <property type="entry name" value="GPR180-like_N"/>
</dbReference>
<dbReference type="InterPro" id="IPR047831">
    <property type="entry name" value="GPR180/TMEM145"/>
</dbReference>
<dbReference type="InterPro" id="IPR019336">
    <property type="entry name" value="GPR180/TMEM145_TM"/>
</dbReference>
<dbReference type="PANTHER" id="PTHR23252">
    <property type="entry name" value="INTIMAL THICKNESS RECEPTOR-RELATED"/>
    <property type="match status" value="1"/>
</dbReference>
<dbReference type="PANTHER" id="PTHR23252:SF24">
    <property type="entry name" value="TRANSMEMBRANE PROTEIN 145"/>
    <property type="match status" value="1"/>
</dbReference>
<dbReference type="Pfam" id="PF10192">
    <property type="entry name" value="GPR180-TMEM145_TM"/>
    <property type="match status" value="1"/>
</dbReference>
<dbReference type="Pfam" id="PF21892">
    <property type="entry name" value="TMEM145_N"/>
    <property type="match status" value="1"/>
</dbReference>
<feature type="chain" id="PRO_0000280356" description="Transmembrane protein 145">
    <location>
        <begin position="1"/>
        <end position="746"/>
    </location>
</feature>
<feature type="transmembrane region" description="Helical" evidence="1">
    <location>
        <begin position="9"/>
        <end position="29"/>
    </location>
</feature>
<feature type="transmembrane region" description="Helical" evidence="1">
    <location>
        <begin position="189"/>
        <end position="209"/>
    </location>
</feature>
<feature type="transmembrane region" description="Helical" evidence="1">
    <location>
        <begin position="221"/>
        <end position="241"/>
    </location>
</feature>
<feature type="transmembrane region" description="Helical" evidence="1">
    <location>
        <begin position="255"/>
        <end position="275"/>
    </location>
</feature>
<feature type="transmembrane region" description="Helical" evidence="1">
    <location>
        <begin position="296"/>
        <end position="316"/>
    </location>
</feature>
<feature type="transmembrane region" description="Helical" evidence="1">
    <location>
        <begin position="332"/>
        <end position="352"/>
    </location>
</feature>
<feature type="transmembrane region" description="Helical" evidence="1">
    <location>
        <begin position="363"/>
        <end position="383"/>
    </location>
</feature>
<feature type="transmembrane region" description="Helical" evidence="1">
    <location>
        <begin position="395"/>
        <end position="415"/>
    </location>
</feature>
<feature type="region of interest" description="Disordered" evidence="2">
    <location>
        <begin position="505"/>
        <end position="604"/>
    </location>
</feature>
<feature type="region of interest" description="Disordered" evidence="2">
    <location>
        <begin position="662"/>
        <end position="684"/>
    </location>
</feature>
<feature type="compositionally biased region" description="Low complexity" evidence="2">
    <location>
        <begin position="567"/>
        <end position="581"/>
    </location>
</feature>
<feature type="compositionally biased region" description="Basic and acidic residues" evidence="2">
    <location>
        <begin position="669"/>
        <end position="679"/>
    </location>
</feature>
<feature type="glycosylation site" description="N-linked (GlcNAc...) asparagine" evidence="1">
    <location>
        <position position="35"/>
    </location>
</feature>
<feature type="glycosylation site" description="N-linked (GlcNAc...) asparagine" evidence="1">
    <location>
        <position position="250"/>
    </location>
</feature>
<feature type="glycosylation site" description="N-linked (GlcNAc...) asparagine" evidence="1">
    <location>
        <position position="458"/>
    </location>
</feature>
<proteinExistence type="evidence at protein level"/>
<evidence type="ECO:0000255" key="1"/>
<evidence type="ECO:0000256" key="2">
    <source>
        <dbReference type="SAM" id="MobiDB-lite"/>
    </source>
</evidence>
<evidence type="ECO:0000305" key="3"/>
<comment type="subcellular location">
    <subcellularLocation>
        <location evidence="3">Membrane</location>
        <topology evidence="3">Multi-pass membrane protein</topology>
    </subcellularLocation>
</comment>
<reference key="1">
    <citation type="journal article" date="2005" name="Science">
        <title>The transcriptional landscape of the mammalian genome.</title>
        <authorList>
            <person name="Carninci P."/>
            <person name="Kasukawa T."/>
            <person name="Katayama S."/>
            <person name="Gough J."/>
            <person name="Frith M.C."/>
            <person name="Maeda N."/>
            <person name="Oyama R."/>
            <person name="Ravasi T."/>
            <person name="Lenhard B."/>
            <person name="Wells C."/>
            <person name="Kodzius R."/>
            <person name="Shimokawa K."/>
            <person name="Bajic V.B."/>
            <person name="Brenner S.E."/>
            <person name="Batalov S."/>
            <person name="Forrest A.R."/>
            <person name="Zavolan M."/>
            <person name="Davis M.J."/>
            <person name="Wilming L.G."/>
            <person name="Aidinis V."/>
            <person name="Allen J.E."/>
            <person name="Ambesi-Impiombato A."/>
            <person name="Apweiler R."/>
            <person name="Aturaliya R.N."/>
            <person name="Bailey T.L."/>
            <person name="Bansal M."/>
            <person name="Baxter L."/>
            <person name="Beisel K.W."/>
            <person name="Bersano T."/>
            <person name="Bono H."/>
            <person name="Chalk A.M."/>
            <person name="Chiu K.P."/>
            <person name="Choudhary V."/>
            <person name="Christoffels A."/>
            <person name="Clutterbuck D.R."/>
            <person name="Crowe M.L."/>
            <person name="Dalla E."/>
            <person name="Dalrymple B.P."/>
            <person name="de Bono B."/>
            <person name="Della Gatta G."/>
            <person name="di Bernardo D."/>
            <person name="Down T."/>
            <person name="Engstrom P."/>
            <person name="Fagiolini M."/>
            <person name="Faulkner G."/>
            <person name="Fletcher C.F."/>
            <person name="Fukushima T."/>
            <person name="Furuno M."/>
            <person name="Futaki S."/>
            <person name="Gariboldi M."/>
            <person name="Georgii-Hemming P."/>
            <person name="Gingeras T.R."/>
            <person name="Gojobori T."/>
            <person name="Green R.E."/>
            <person name="Gustincich S."/>
            <person name="Harbers M."/>
            <person name="Hayashi Y."/>
            <person name="Hensch T.K."/>
            <person name="Hirokawa N."/>
            <person name="Hill D."/>
            <person name="Huminiecki L."/>
            <person name="Iacono M."/>
            <person name="Ikeo K."/>
            <person name="Iwama A."/>
            <person name="Ishikawa T."/>
            <person name="Jakt M."/>
            <person name="Kanapin A."/>
            <person name="Katoh M."/>
            <person name="Kawasawa Y."/>
            <person name="Kelso J."/>
            <person name="Kitamura H."/>
            <person name="Kitano H."/>
            <person name="Kollias G."/>
            <person name="Krishnan S.P."/>
            <person name="Kruger A."/>
            <person name="Kummerfeld S.K."/>
            <person name="Kurochkin I.V."/>
            <person name="Lareau L.F."/>
            <person name="Lazarevic D."/>
            <person name="Lipovich L."/>
            <person name="Liu J."/>
            <person name="Liuni S."/>
            <person name="McWilliam S."/>
            <person name="Madan Babu M."/>
            <person name="Madera M."/>
            <person name="Marchionni L."/>
            <person name="Matsuda H."/>
            <person name="Matsuzawa S."/>
            <person name="Miki H."/>
            <person name="Mignone F."/>
            <person name="Miyake S."/>
            <person name="Morris K."/>
            <person name="Mottagui-Tabar S."/>
            <person name="Mulder N."/>
            <person name="Nakano N."/>
            <person name="Nakauchi H."/>
            <person name="Ng P."/>
            <person name="Nilsson R."/>
            <person name="Nishiguchi S."/>
            <person name="Nishikawa S."/>
            <person name="Nori F."/>
            <person name="Ohara O."/>
            <person name="Okazaki Y."/>
            <person name="Orlando V."/>
            <person name="Pang K.C."/>
            <person name="Pavan W.J."/>
            <person name="Pavesi G."/>
            <person name="Pesole G."/>
            <person name="Petrovsky N."/>
            <person name="Piazza S."/>
            <person name="Reed J."/>
            <person name="Reid J.F."/>
            <person name="Ring B.Z."/>
            <person name="Ringwald M."/>
            <person name="Rost B."/>
            <person name="Ruan Y."/>
            <person name="Salzberg S.L."/>
            <person name="Sandelin A."/>
            <person name="Schneider C."/>
            <person name="Schoenbach C."/>
            <person name="Sekiguchi K."/>
            <person name="Semple C.A."/>
            <person name="Seno S."/>
            <person name="Sessa L."/>
            <person name="Sheng Y."/>
            <person name="Shibata Y."/>
            <person name="Shimada H."/>
            <person name="Shimada K."/>
            <person name="Silva D."/>
            <person name="Sinclair B."/>
            <person name="Sperling S."/>
            <person name="Stupka E."/>
            <person name="Sugiura K."/>
            <person name="Sultana R."/>
            <person name="Takenaka Y."/>
            <person name="Taki K."/>
            <person name="Tammoja K."/>
            <person name="Tan S.L."/>
            <person name="Tang S."/>
            <person name="Taylor M.S."/>
            <person name="Tegner J."/>
            <person name="Teichmann S.A."/>
            <person name="Ueda H.R."/>
            <person name="van Nimwegen E."/>
            <person name="Verardo R."/>
            <person name="Wei C.L."/>
            <person name="Yagi K."/>
            <person name="Yamanishi H."/>
            <person name="Zabarovsky E."/>
            <person name="Zhu S."/>
            <person name="Zimmer A."/>
            <person name="Hide W."/>
            <person name="Bult C."/>
            <person name="Grimmond S.M."/>
            <person name="Teasdale R.D."/>
            <person name="Liu E.T."/>
            <person name="Brusic V."/>
            <person name="Quackenbush J."/>
            <person name="Wahlestedt C."/>
            <person name="Mattick J.S."/>
            <person name="Hume D.A."/>
            <person name="Kai C."/>
            <person name="Sasaki D."/>
            <person name="Tomaru Y."/>
            <person name="Fukuda S."/>
            <person name="Kanamori-Katayama M."/>
            <person name="Suzuki M."/>
            <person name="Aoki J."/>
            <person name="Arakawa T."/>
            <person name="Iida J."/>
            <person name="Imamura K."/>
            <person name="Itoh M."/>
            <person name="Kato T."/>
            <person name="Kawaji H."/>
            <person name="Kawagashira N."/>
            <person name="Kawashima T."/>
            <person name="Kojima M."/>
            <person name="Kondo S."/>
            <person name="Konno H."/>
            <person name="Nakano K."/>
            <person name="Ninomiya N."/>
            <person name="Nishio T."/>
            <person name="Okada M."/>
            <person name="Plessy C."/>
            <person name="Shibata K."/>
            <person name="Shiraki T."/>
            <person name="Suzuki S."/>
            <person name="Tagami M."/>
            <person name="Waki K."/>
            <person name="Watahiki A."/>
            <person name="Okamura-Oho Y."/>
            <person name="Suzuki H."/>
            <person name="Kawai J."/>
            <person name="Hayashizaki Y."/>
        </authorList>
    </citation>
    <scope>NUCLEOTIDE SEQUENCE [LARGE SCALE MRNA]</scope>
    <source>
        <strain>C57BL/6J</strain>
        <tissue>Cerebellum</tissue>
    </source>
</reference>
<reference key="2">
    <citation type="journal article" date="2007" name="Mol. Cell. Proteomics">
        <title>Qualitative and quantitative analyses of protein phosphorylation in naive and stimulated mouse synaptosomal preparations.</title>
        <authorList>
            <person name="Munton R.P."/>
            <person name="Tweedie-Cullen R."/>
            <person name="Livingstone-Zatchej M."/>
            <person name="Weinandy F."/>
            <person name="Waidelich M."/>
            <person name="Longo D."/>
            <person name="Gehrig P."/>
            <person name="Potthast F."/>
            <person name="Rutishauser D."/>
            <person name="Gerrits B."/>
            <person name="Panse C."/>
            <person name="Schlapbach R."/>
            <person name="Mansuy I.M."/>
        </authorList>
    </citation>
    <scope>IDENTIFICATION BY MASS SPECTROMETRY [LARGE SCALE ANALYSIS]</scope>
    <source>
        <tissue>Brain cortex</tissue>
    </source>
</reference>
<accession>Q8C4U2</accession>
<organism>
    <name type="scientific">Mus musculus</name>
    <name type="common">Mouse</name>
    <dbReference type="NCBI Taxonomy" id="10090"/>
    <lineage>
        <taxon>Eukaryota</taxon>
        <taxon>Metazoa</taxon>
        <taxon>Chordata</taxon>
        <taxon>Craniata</taxon>
        <taxon>Vertebrata</taxon>
        <taxon>Euteleostomi</taxon>
        <taxon>Mammalia</taxon>
        <taxon>Eutheria</taxon>
        <taxon>Euarchontoglires</taxon>
        <taxon>Glires</taxon>
        <taxon>Rodentia</taxon>
        <taxon>Myomorpha</taxon>
        <taxon>Muroidea</taxon>
        <taxon>Muridae</taxon>
        <taxon>Murinae</taxon>
        <taxon>Mus</taxon>
        <taxon>Mus</taxon>
    </lineage>
</organism>
<protein>
    <recommendedName>
        <fullName>Transmembrane protein 145</fullName>
    </recommendedName>
</protein>
<gene>
    <name type="primary">Tmem145</name>
</gene>
<sequence>MEPSRAPVLGRLLPPLLLLLLPLYPRTRAKYVRGNLSSKEDWVFLTRFCFLSDYGRLDFRFRYPEAKCCQNILLYFDDPSQWPAVYKARDKDCLAKESVIRPENNQVINLTTQYAWSGCQVVSEEGTRYLSCSSGRSFRSVRERWWYIALSKCGGDGLQLEYEMVLTNGKSFWTRHFSADEFGILETDVTFLLIFTLIFVLSCYFGYLLKGRQLLHTTYKMFMAAAGVEVLSLLFFCIYWGQYATDGIGNGSVKILAKLLFSSSFLIFLLTLILLGKGFTVTRGRISHSGSVKLSVYMTLYTLTHVVLLIYEAEFFDPGQVLYTYESPAGYGLIGLQVAAYVWFCYAVLVSLRHYPEKQPFYVPFFAAYTLWFFAVPVMALIANFGIPKWAREKIVNGIQLGIHLYAHGVFLIMTRPSAANKNFPYHVRTSQIASAGVPGPGGSQSADKAFPQHVYGNVTFISDSVPNFTELFSIPPPTSSAGKQVEETAVAAAVAPRGRVVTMAEPGAASPPPPARFSKAVHSGWDGPTPSYQPLVPPEQRRGKPASPNTSACTQPGALHPRSEHPFPASAPRAAHRAPAGLRNPVSLPAQGLGHARHPAPLPHPAPTLDALRPAPFPLVPNGPAGAVLRVPSLSPCPEWLRNLDSRCSVISAPLTPFETSDPAGLRNTRDDRLDPARPSRTLRPSSHCLETDIVKLVSTLKPSLGFVTSDLCFVRPSECQGPSHGLWQKDVFSSCQNKEDSLSF</sequence>
<keyword id="KW-0325">Glycoprotein</keyword>
<keyword id="KW-0472">Membrane</keyword>
<keyword id="KW-1185">Reference proteome</keyword>
<keyword id="KW-0812">Transmembrane</keyword>
<keyword id="KW-1133">Transmembrane helix</keyword>
<name>TM145_MOUSE</name>